<accession>A7FMH3</accession>
<keyword id="KW-0963">Cytoplasm</keyword>
<keyword id="KW-0413">Isomerase</keyword>
<keyword id="KW-0464">Manganese</keyword>
<keyword id="KW-0479">Metal-binding</keyword>
<proteinExistence type="inferred from homology"/>
<feature type="chain" id="PRO_1000062154" description="Phosphopentomutase">
    <location>
        <begin position="1"/>
        <end position="407"/>
    </location>
</feature>
<feature type="binding site" evidence="1">
    <location>
        <position position="10"/>
    </location>
    <ligand>
        <name>Mn(2+)</name>
        <dbReference type="ChEBI" id="CHEBI:29035"/>
        <label>1</label>
    </ligand>
</feature>
<feature type="binding site" evidence="1">
    <location>
        <position position="306"/>
    </location>
    <ligand>
        <name>Mn(2+)</name>
        <dbReference type="ChEBI" id="CHEBI:29035"/>
        <label>2</label>
    </ligand>
</feature>
<feature type="binding site" evidence="1">
    <location>
        <position position="311"/>
    </location>
    <ligand>
        <name>Mn(2+)</name>
        <dbReference type="ChEBI" id="CHEBI:29035"/>
        <label>2</label>
    </ligand>
</feature>
<feature type="binding site" evidence="1">
    <location>
        <position position="347"/>
    </location>
    <ligand>
        <name>Mn(2+)</name>
        <dbReference type="ChEBI" id="CHEBI:29035"/>
        <label>1</label>
    </ligand>
</feature>
<feature type="binding site" evidence="1">
    <location>
        <position position="348"/>
    </location>
    <ligand>
        <name>Mn(2+)</name>
        <dbReference type="ChEBI" id="CHEBI:29035"/>
        <label>1</label>
    </ligand>
</feature>
<feature type="binding site" evidence="1">
    <location>
        <position position="359"/>
    </location>
    <ligand>
        <name>Mn(2+)</name>
        <dbReference type="ChEBI" id="CHEBI:29035"/>
        <label>2</label>
    </ligand>
</feature>
<evidence type="ECO:0000255" key="1">
    <source>
        <dbReference type="HAMAP-Rule" id="MF_00740"/>
    </source>
</evidence>
<comment type="function">
    <text evidence="1">Isomerase that catalyzes the conversion of deoxy-ribose 1-phosphate (dRib-1-P) and ribose 1-phosphate (Rib-1-P) to deoxy-ribose 5-phosphate (dRib-5-P) and ribose 5-phosphate (Rib-5-P), respectively.</text>
</comment>
<comment type="catalytic activity">
    <reaction evidence="1">
        <text>2-deoxy-alpha-D-ribose 1-phosphate = 2-deoxy-D-ribose 5-phosphate</text>
        <dbReference type="Rhea" id="RHEA:27658"/>
        <dbReference type="ChEBI" id="CHEBI:57259"/>
        <dbReference type="ChEBI" id="CHEBI:62877"/>
        <dbReference type="EC" id="5.4.2.7"/>
    </reaction>
</comment>
<comment type="catalytic activity">
    <reaction evidence="1">
        <text>alpha-D-ribose 1-phosphate = D-ribose 5-phosphate</text>
        <dbReference type="Rhea" id="RHEA:18793"/>
        <dbReference type="ChEBI" id="CHEBI:57720"/>
        <dbReference type="ChEBI" id="CHEBI:78346"/>
        <dbReference type="EC" id="5.4.2.7"/>
    </reaction>
</comment>
<comment type="cofactor">
    <cofactor evidence="1">
        <name>Mn(2+)</name>
        <dbReference type="ChEBI" id="CHEBI:29035"/>
    </cofactor>
    <text evidence="1">Binds 2 manganese ions.</text>
</comment>
<comment type="pathway">
    <text evidence="1">Carbohydrate degradation; 2-deoxy-D-ribose 1-phosphate degradation; D-glyceraldehyde 3-phosphate and acetaldehyde from 2-deoxy-alpha-D-ribose 1-phosphate: step 1/2.</text>
</comment>
<comment type="subcellular location">
    <subcellularLocation>
        <location evidence="1">Cytoplasm</location>
    </subcellularLocation>
</comment>
<comment type="similarity">
    <text evidence="1">Belongs to the phosphopentomutase family.</text>
</comment>
<dbReference type="EC" id="5.4.2.7" evidence="1"/>
<dbReference type="EMBL" id="CP000720">
    <property type="protein sequence ID" value="ABS46343.1"/>
    <property type="molecule type" value="Genomic_DNA"/>
</dbReference>
<dbReference type="RefSeq" id="WP_011191688.1">
    <property type="nucleotide sequence ID" value="NC_009708.1"/>
</dbReference>
<dbReference type="SMR" id="A7FMH3"/>
<dbReference type="GeneID" id="49787417"/>
<dbReference type="KEGG" id="ypi:YpsIP31758_3496"/>
<dbReference type="HOGENOM" id="CLU_053861_0_0_6"/>
<dbReference type="UniPathway" id="UPA00002">
    <property type="reaction ID" value="UER00467"/>
</dbReference>
<dbReference type="Proteomes" id="UP000002412">
    <property type="component" value="Chromosome"/>
</dbReference>
<dbReference type="GO" id="GO:0005829">
    <property type="term" value="C:cytosol"/>
    <property type="evidence" value="ECO:0007669"/>
    <property type="project" value="TreeGrafter"/>
</dbReference>
<dbReference type="GO" id="GO:0000287">
    <property type="term" value="F:magnesium ion binding"/>
    <property type="evidence" value="ECO:0007669"/>
    <property type="project" value="InterPro"/>
</dbReference>
<dbReference type="GO" id="GO:0030145">
    <property type="term" value="F:manganese ion binding"/>
    <property type="evidence" value="ECO:0007669"/>
    <property type="project" value="UniProtKB-UniRule"/>
</dbReference>
<dbReference type="GO" id="GO:0008973">
    <property type="term" value="F:phosphopentomutase activity"/>
    <property type="evidence" value="ECO:0007669"/>
    <property type="project" value="UniProtKB-UniRule"/>
</dbReference>
<dbReference type="GO" id="GO:0006018">
    <property type="term" value="P:2-deoxyribose 1-phosphate catabolic process"/>
    <property type="evidence" value="ECO:0007669"/>
    <property type="project" value="UniProtKB-UniRule"/>
</dbReference>
<dbReference type="GO" id="GO:0006015">
    <property type="term" value="P:5-phosphoribose 1-diphosphate biosynthetic process"/>
    <property type="evidence" value="ECO:0007669"/>
    <property type="project" value="UniProtKB-UniPathway"/>
</dbReference>
<dbReference type="GO" id="GO:0043094">
    <property type="term" value="P:metabolic compound salvage"/>
    <property type="evidence" value="ECO:0007669"/>
    <property type="project" value="InterPro"/>
</dbReference>
<dbReference type="GO" id="GO:0009117">
    <property type="term" value="P:nucleotide metabolic process"/>
    <property type="evidence" value="ECO:0007669"/>
    <property type="project" value="InterPro"/>
</dbReference>
<dbReference type="CDD" id="cd16009">
    <property type="entry name" value="PPM"/>
    <property type="match status" value="1"/>
</dbReference>
<dbReference type="FunFam" id="3.30.70.1250:FF:000001">
    <property type="entry name" value="Phosphopentomutase"/>
    <property type="match status" value="1"/>
</dbReference>
<dbReference type="Gene3D" id="3.40.720.10">
    <property type="entry name" value="Alkaline Phosphatase, subunit A"/>
    <property type="match status" value="1"/>
</dbReference>
<dbReference type="Gene3D" id="3.30.70.1250">
    <property type="entry name" value="Phosphopentomutase"/>
    <property type="match status" value="1"/>
</dbReference>
<dbReference type="HAMAP" id="MF_00740">
    <property type="entry name" value="Phosphopentomut"/>
    <property type="match status" value="1"/>
</dbReference>
<dbReference type="InterPro" id="IPR017850">
    <property type="entry name" value="Alkaline_phosphatase_core_sf"/>
</dbReference>
<dbReference type="InterPro" id="IPR010045">
    <property type="entry name" value="DeoB"/>
</dbReference>
<dbReference type="InterPro" id="IPR006124">
    <property type="entry name" value="Metalloenzyme"/>
</dbReference>
<dbReference type="InterPro" id="IPR024052">
    <property type="entry name" value="Phosphopentomutase_DeoB_cap_sf"/>
</dbReference>
<dbReference type="NCBIfam" id="TIGR01696">
    <property type="entry name" value="deoB"/>
    <property type="match status" value="1"/>
</dbReference>
<dbReference type="NCBIfam" id="NF003766">
    <property type="entry name" value="PRK05362.1"/>
    <property type="match status" value="1"/>
</dbReference>
<dbReference type="PANTHER" id="PTHR21110">
    <property type="entry name" value="PHOSPHOPENTOMUTASE"/>
    <property type="match status" value="1"/>
</dbReference>
<dbReference type="PANTHER" id="PTHR21110:SF0">
    <property type="entry name" value="PHOSPHOPENTOMUTASE"/>
    <property type="match status" value="1"/>
</dbReference>
<dbReference type="Pfam" id="PF01676">
    <property type="entry name" value="Metalloenzyme"/>
    <property type="match status" value="1"/>
</dbReference>
<dbReference type="PIRSF" id="PIRSF001491">
    <property type="entry name" value="Ppentomutase"/>
    <property type="match status" value="1"/>
</dbReference>
<dbReference type="SUPFAM" id="SSF53649">
    <property type="entry name" value="Alkaline phosphatase-like"/>
    <property type="match status" value="1"/>
</dbReference>
<dbReference type="SUPFAM" id="SSF143856">
    <property type="entry name" value="DeoB insert domain-like"/>
    <property type="match status" value="1"/>
</dbReference>
<name>DEOB_YERP3</name>
<gene>
    <name evidence="1" type="primary">deoB</name>
    <name type="ordered locus">YpsIP31758_3496</name>
</gene>
<sequence>MKRTFIMVLDSFGIGASADAKKFGDEGADTLGHIAEACARGEANVGRSGPLTLPNLSRLGLGKAAEESTGTFPVGLDKNADIIGAYGYASELSSGKDTPSGHWEIAGVPVLFDWGYFSDVENSFPQELLDKLVKRANLPGYLGNCHSSGTVILDQLGEEHMKTGKPIFYTSADSVFQIACHEETFGLDRLYELCEIAREELTDGGYNIGRVIARPFIGDKPGHFQRTGNRHDLAVEPPAPTMLKKLVDEKGGEVVSIGKIADIYAQVGITQKVKATGLDALFDATIEEMKKAGDNTIVFTNFVDFDSSYGHRRDVAGYAAALELFDRRLPELMALVKEDDILILTADHGCDPTWPGTDHTREHIPVLVYGPKVKPGSLGHRETFADIGQTVAAYFGLSPMDYGKNML</sequence>
<protein>
    <recommendedName>
        <fullName evidence="1">Phosphopentomutase</fullName>
        <ecNumber evidence="1">5.4.2.7</ecNumber>
    </recommendedName>
    <alternativeName>
        <fullName evidence="1">Phosphodeoxyribomutase</fullName>
    </alternativeName>
</protein>
<reference key="1">
    <citation type="journal article" date="2007" name="PLoS Genet.">
        <title>The complete genome sequence of Yersinia pseudotuberculosis IP31758, the causative agent of Far East scarlet-like fever.</title>
        <authorList>
            <person name="Eppinger M."/>
            <person name="Rosovitz M.J."/>
            <person name="Fricke W.F."/>
            <person name="Rasko D.A."/>
            <person name="Kokorina G."/>
            <person name="Fayolle C."/>
            <person name="Lindler L.E."/>
            <person name="Carniel E."/>
            <person name="Ravel J."/>
        </authorList>
    </citation>
    <scope>NUCLEOTIDE SEQUENCE [LARGE SCALE GENOMIC DNA]</scope>
    <source>
        <strain>IP 31758</strain>
    </source>
</reference>
<organism>
    <name type="scientific">Yersinia pseudotuberculosis serotype O:1b (strain IP 31758)</name>
    <dbReference type="NCBI Taxonomy" id="349747"/>
    <lineage>
        <taxon>Bacteria</taxon>
        <taxon>Pseudomonadati</taxon>
        <taxon>Pseudomonadota</taxon>
        <taxon>Gammaproteobacteria</taxon>
        <taxon>Enterobacterales</taxon>
        <taxon>Yersiniaceae</taxon>
        <taxon>Yersinia</taxon>
    </lineage>
</organism>